<evidence type="ECO:0000250" key="1"/>
<evidence type="ECO:0000250" key="2">
    <source>
        <dbReference type="UniProtKB" id="Q29RF7"/>
    </source>
</evidence>
<evidence type="ECO:0000255" key="3"/>
<evidence type="ECO:0000256" key="4">
    <source>
        <dbReference type="SAM" id="MobiDB-lite"/>
    </source>
</evidence>
<evidence type="ECO:0000305" key="5"/>
<evidence type="ECO:0000312" key="6">
    <source>
        <dbReference type="EMBL" id="CAH65181.1"/>
    </source>
</evidence>
<comment type="function">
    <text evidence="1">May regulate sister chromatid cohesion during mitosis and couple it to DNA replication.</text>
</comment>
<comment type="subunit">
    <text evidence="2">Interacts with the cohesin complex. Binds chromatin in a cohesin-dependent manner (By similarity).</text>
</comment>
<comment type="subcellular location">
    <subcellularLocation>
        <location evidence="2">Nucleus</location>
    </subcellularLocation>
</comment>
<comment type="similarity">
    <text evidence="5">Belongs to the PDS5 family.</text>
</comment>
<comment type="sequence caution" evidence="5">
    <conflict type="erroneous initiation">
        <sequence resource="EMBL-CDS" id="CAH65181"/>
    </conflict>
</comment>
<keyword id="KW-0131">Cell cycle</keyword>
<keyword id="KW-0132">Cell division</keyword>
<keyword id="KW-0498">Mitosis</keyword>
<keyword id="KW-0539">Nucleus</keyword>
<keyword id="KW-1185">Reference proteome</keyword>
<keyword id="KW-0677">Repeat</keyword>
<reference evidence="6" key="1">
    <citation type="journal article" date="2005" name="Genome Biol.">
        <title>Full-length cDNAs from chicken bursal lymphocytes to facilitate gene function analysis.</title>
        <authorList>
            <person name="Caldwell R.B."/>
            <person name="Kierzek A.M."/>
            <person name="Arakawa H."/>
            <person name="Bezzubov Y."/>
            <person name="Zaim J."/>
            <person name="Fiedler P."/>
            <person name="Kutter S."/>
            <person name="Blagodatski A."/>
            <person name="Kostovska D."/>
            <person name="Koter M."/>
            <person name="Plachy J."/>
            <person name="Carninci P."/>
            <person name="Hayashizaki Y."/>
            <person name="Buerstedde J.-M."/>
        </authorList>
    </citation>
    <scope>NUCLEOTIDE SEQUENCE [LARGE SCALE MRNA]</scope>
    <source>
        <strain evidence="6">CB</strain>
        <tissue evidence="6">Bursa of Fabricius</tissue>
    </source>
</reference>
<sequence>MDFPAAQPKPAADGKIIYYPPGVKETTDKITNDEVVKRLKMVVKTFMDMDQDSEDEKQQYLPLALHLASEFFLRNPNKDVRLLVACCLADIFRIYAPEAPYTSHDKLKDIFLFITRQLKGLEDTKSPQFNRYFYLLENLAWVKSYNICFELEDCNEIFIQLFRTLFSVINNSHNQKVQMHMLDLMSSIIMEGDGVTQELLDSILINLIPAHKNLNKQAFDLAKVLLKRTVQTIEPCIANFFNQVLVLGKSSVSDLSEHVFDLILELFAIDPHLLLSVMPQLEFKLKSNDGEERLAVVRLLAKLFGSKDSDLATQNRPLWQCFLGRFNDIHVPVRLESVKFASHCLMNHPDLAKDLTEYLKVRSHDPEEAIRHDVIVTIITAGKRDLSLVNDQLLGFVRERTLDKRWRVRKEAMMGLAQLYKKYCLHAEAGKDAAEKVSWIKDKLLHIYYQNSIDDKLLVEKIFAQYLVPHNLETEERMKCLYYLYASLDPNAVKALNEMWKCQNMLRSHVRELLDLHKQPTSEANSAAMFGKLMTIAKNLPDPGKAQDFVKKFNQVLGDDEKLRSQLELLISPTCSCKQADVCVREIARKLANPKQPTNPFLEMVKFLLERIAPVHIDSEAISALVKLMNKSIEGTADDEEEGVSPDTAIRAGLELLKVLSFTHPTSFHSAETYESLLQCLRMEDDKVAEAAIQIFRNTGHKIETDLPQIRSTLIPILHQKAKRGTPHQAKQAVHCIHAIFSNKEVQLAQIFEPLSRSLNADVPEQLITPLVSLGHISMLAPDQFASPMKSVVANFVVKDLLMNDRSTGEKNGKLWSPDEEVSPEVLAKVQAIKLLVRWLLGMKNNQSKSANSTLRLLSAMLVSEGDLTEQKRISKSDMSRLRLAAGSAIMKLAQEPCYHEIITPEQFQLCALVINDECYQVRQIFAQKLHKALVKLLLPLEYMAIFALCAKDPVKERRAHARQCLLKNISIRREYIKQNPMANEKLLSLLPEYVVPYMIHLLAHDPDFTKPQDVDQLRDVKECLWFMLEVLMTKNENNSHAFMKKMAENIKLTRDAQSPDEPKANEKLYTVCDVALCVINSKSALCNADSPKDPVLPTKFFTQPEKDFSNDRNYISEETRVLLLTGKPKPTGVLDTVNKPLSATGRRPYIRTTGSETGSNISVNSELSSSAGNRSREQSSDISETGVSENDENPVRIISVTPAKTEPVKNKEINSDQATQGNSTERGKKRTATASGTENIHQKAEENNADETGPSLAAKTRRGRPPKPEPQGTTAKNEETNKPPVRGRKRAAASQESPGSLEAGNAKAPKQQDTAKKPAAAQRQIDLQR</sequence>
<gene>
    <name evidence="2" type="primary">PDS5A</name>
    <name type="ORF">RCJMB04_6f4</name>
</gene>
<feature type="chain" id="PRO_0000296344" description="Sister chromatid cohesion protein PDS5 homolog A">
    <location>
        <begin position="1"/>
        <end position="1330"/>
    </location>
</feature>
<feature type="repeat" description="HEAT" evidence="3">
    <location>
        <begin position="387"/>
        <end position="423"/>
    </location>
</feature>
<feature type="region of interest" description="Disordered" evidence="4">
    <location>
        <begin position="1138"/>
        <end position="1330"/>
    </location>
</feature>
<feature type="compositionally biased region" description="Low complexity" evidence="4">
    <location>
        <begin position="1160"/>
        <end position="1171"/>
    </location>
</feature>
<feature type="compositionally biased region" description="Polar residues" evidence="4">
    <location>
        <begin position="1216"/>
        <end position="1225"/>
    </location>
</feature>
<proteinExistence type="evidence at transcript level"/>
<protein>
    <recommendedName>
        <fullName>Sister chromatid cohesion protein PDS5 homolog A</fullName>
    </recommendedName>
</protein>
<dbReference type="EMBL" id="AJ851547">
    <property type="protein sequence ID" value="CAH65181.1"/>
    <property type="status" value="ALT_INIT"/>
    <property type="molecule type" value="mRNA"/>
</dbReference>
<dbReference type="RefSeq" id="NP_001012598.1">
    <property type="nucleotide sequence ID" value="NM_001012580.1"/>
</dbReference>
<dbReference type="SMR" id="Q5F3V3"/>
<dbReference type="FunCoup" id="Q5F3V3">
    <property type="interactions" value="3273"/>
</dbReference>
<dbReference type="STRING" id="9031.ENSGALP00000023059"/>
<dbReference type="GlyGen" id="Q5F3V3">
    <property type="glycosylation" value="1 site"/>
</dbReference>
<dbReference type="PaxDb" id="9031-ENSGALP00000023059"/>
<dbReference type="GeneID" id="422787"/>
<dbReference type="KEGG" id="gga:422787"/>
<dbReference type="CTD" id="23244"/>
<dbReference type="VEuPathDB" id="HostDB:geneid_422787"/>
<dbReference type="eggNOG" id="KOG1525">
    <property type="taxonomic scope" value="Eukaryota"/>
</dbReference>
<dbReference type="InParanoid" id="Q5F3V3"/>
<dbReference type="OrthoDB" id="200660at2759"/>
<dbReference type="PhylomeDB" id="Q5F3V3"/>
<dbReference type="PRO" id="PR:Q5F3V3"/>
<dbReference type="Proteomes" id="UP000000539">
    <property type="component" value="Unassembled WGS sequence"/>
</dbReference>
<dbReference type="GO" id="GO:0000785">
    <property type="term" value="C:chromatin"/>
    <property type="evidence" value="ECO:0000318"/>
    <property type="project" value="GO_Central"/>
</dbReference>
<dbReference type="GO" id="GO:0005634">
    <property type="term" value="C:nucleus"/>
    <property type="evidence" value="ECO:0000318"/>
    <property type="project" value="GO_Central"/>
</dbReference>
<dbReference type="GO" id="GO:0051301">
    <property type="term" value="P:cell division"/>
    <property type="evidence" value="ECO:0007669"/>
    <property type="project" value="UniProtKB-KW"/>
</dbReference>
<dbReference type="GO" id="GO:0006281">
    <property type="term" value="P:DNA repair"/>
    <property type="evidence" value="ECO:0000318"/>
    <property type="project" value="GO_Central"/>
</dbReference>
<dbReference type="GO" id="GO:0007064">
    <property type="term" value="P:mitotic sister chromatid cohesion"/>
    <property type="evidence" value="ECO:0000318"/>
    <property type="project" value="GO_Central"/>
</dbReference>
<dbReference type="GO" id="GO:0008156">
    <property type="term" value="P:negative regulation of DNA replication"/>
    <property type="evidence" value="ECO:0000250"/>
    <property type="project" value="UniProtKB"/>
</dbReference>
<dbReference type="CDD" id="cd19953">
    <property type="entry name" value="PDS5"/>
    <property type="match status" value="1"/>
</dbReference>
<dbReference type="FunFam" id="1.25.10.10:FF:001146">
    <property type="entry name" value="PDS5 cohesin associated factor B"/>
    <property type="match status" value="1"/>
</dbReference>
<dbReference type="FunFam" id="1.25.10.10:FF:000064">
    <property type="entry name" value="Sister chromatid cohesion protein PDS5 homolog A"/>
    <property type="match status" value="1"/>
</dbReference>
<dbReference type="Gene3D" id="1.25.10.10">
    <property type="entry name" value="Leucine-rich Repeat Variant"/>
    <property type="match status" value="2"/>
</dbReference>
<dbReference type="InterPro" id="IPR011989">
    <property type="entry name" value="ARM-like"/>
</dbReference>
<dbReference type="InterPro" id="IPR016024">
    <property type="entry name" value="ARM-type_fold"/>
</dbReference>
<dbReference type="InterPro" id="IPR039776">
    <property type="entry name" value="Pds5"/>
</dbReference>
<dbReference type="PANTHER" id="PTHR12663">
    <property type="entry name" value="ANDROGEN INDUCED INHIBITOR OF PROLIFERATION AS3 / PDS5-RELATED"/>
    <property type="match status" value="1"/>
</dbReference>
<dbReference type="PANTHER" id="PTHR12663:SF2">
    <property type="entry name" value="SISTER CHROMATID COHESION PROTEIN PDS5 HOMOLOG A"/>
    <property type="match status" value="1"/>
</dbReference>
<dbReference type="Pfam" id="PF20168">
    <property type="entry name" value="PDS5"/>
    <property type="match status" value="1"/>
</dbReference>
<dbReference type="SUPFAM" id="SSF48371">
    <property type="entry name" value="ARM repeat"/>
    <property type="match status" value="1"/>
</dbReference>
<organism>
    <name type="scientific">Gallus gallus</name>
    <name type="common">Chicken</name>
    <dbReference type="NCBI Taxonomy" id="9031"/>
    <lineage>
        <taxon>Eukaryota</taxon>
        <taxon>Metazoa</taxon>
        <taxon>Chordata</taxon>
        <taxon>Craniata</taxon>
        <taxon>Vertebrata</taxon>
        <taxon>Euteleostomi</taxon>
        <taxon>Archelosauria</taxon>
        <taxon>Archosauria</taxon>
        <taxon>Dinosauria</taxon>
        <taxon>Saurischia</taxon>
        <taxon>Theropoda</taxon>
        <taxon>Coelurosauria</taxon>
        <taxon>Aves</taxon>
        <taxon>Neognathae</taxon>
        <taxon>Galloanserae</taxon>
        <taxon>Galliformes</taxon>
        <taxon>Phasianidae</taxon>
        <taxon>Phasianinae</taxon>
        <taxon>Gallus</taxon>
    </lineage>
</organism>
<accession>Q5F3V3</accession>
<name>PDS5A_CHICK</name>